<sequence>MSTPARRRLMRDFKRLQEDPPAGVSGAPSENNIMVWNAVIFGPEGTPFEDGTFKLTIEFTEEYPNKPPTVRFVSKMFHPNVYADGSICLDILQNRWSPTYDVSSILTSIQSLLDEPNPNSPANSQAAQLYQENKREYEKRVSAIVEQSWRDC</sequence>
<evidence type="ECO:0000250" key="1">
    <source>
        <dbReference type="UniProtKB" id="Q9Z255"/>
    </source>
</evidence>
<evidence type="ECO:0000255" key="2">
    <source>
        <dbReference type="PROSITE-ProRule" id="PRU00388"/>
    </source>
</evidence>
<evidence type="ECO:0000255" key="3">
    <source>
        <dbReference type="PROSITE-ProRule" id="PRU10133"/>
    </source>
</evidence>
<evidence type="ECO:0000269" key="4">
    <source>
    </source>
</evidence>
<evidence type="ECO:0000269" key="5">
    <source>
    </source>
</evidence>
<evidence type="ECO:0000269" key="6">
    <source>
    </source>
</evidence>
<evidence type="ECO:0000269" key="7">
    <source>
    </source>
</evidence>
<evidence type="ECO:0000269" key="8">
    <source>
    </source>
</evidence>
<evidence type="ECO:0000269" key="9">
    <source>
    </source>
</evidence>
<evidence type="ECO:0000269" key="10">
    <source>
    </source>
</evidence>
<evidence type="ECO:0000269" key="11">
    <source>
    </source>
</evidence>
<evidence type="ECO:0000269" key="12">
    <source>
    </source>
</evidence>
<evidence type="ECO:0000269" key="13">
    <source>
    </source>
</evidence>
<evidence type="ECO:0000269" key="14">
    <source>
    </source>
</evidence>
<evidence type="ECO:0000269" key="15">
    <source>
    </source>
</evidence>
<evidence type="ECO:0000303" key="16">
    <source>
    </source>
</evidence>
<evidence type="ECO:0000303" key="17">
    <source>
    </source>
</evidence>
<evidence type="ECO:0000303" key="18">
    <source>
    </source>
</evidence>
<evidence type="ECO:0000305" key="19"/>
<evidence type="ECO:0000312" key="20">
    <source>
        <dbReference type="HGNC" id="HGNC:12472"/>
    </source>
</evidence>
<evidence type="ECO:0007744" key="21">
    <source>
        <dbReference type="PDB" id="8BTL"/>
    </source>
</evidence>
<evidence type="ECO:0007829" key="22">
    <source>
        <dbReference type="PDB" id="6CYO"/>
    </source>
</evidence>
<evidence type="ECO:0007829" key="23">
    <source>
        <dbReference type="PDB" id="8IEJ"/>
    </source>
</evidence>
<dbReference type="EC" id="2.3.2.23" evidence="6 10"/>
<dbReference type="EMBL" id="M74524">
    <property type="protein sequence ID" value="AAA35981.1"/>
    <property type="molecule type" value="mRNA"/>
</dbReference>
<dbReference type="EMBL" id="AK297696">
    <property type="protein sequence ID" value="BAG60054.1"/>
    <property type="molecule type" value="mRNA"/>
</dbReference>
<dbReference type="EMBL" id="AK313092">
    <property type="protein sequence ID" value="BAG35916.1"/>
    <property type="molecule type" value="mRNA"/>
</dbReference>
<dbReference type="EMBL" id="DQ068065">
    <property type="protein sequence ID" value="AAY46159.1"/>
    <property type="molecule type" value="Genomic_DNA"/>
</dbReference>
<dbReference type="EMBL" id="AC004913">
    <property type="status" value="NOT_ANNOTATED_CDS"/>
    <property type="molecule type" value="Genomic_DNA"/>
</dbReference>
<dbReference type="EMBL" id="CH471161">
    <property type="protein sequence ID" value="EAW89861.1"/>
    <property type="molecule type" value="Genomic_DNA"/>
</dbReference>
<dbReference type="EMBL" id="CH471161">
    <property type="protein sequence ID" value="EAW89862.1"/>
    <property type="molecule type" value="Genomic_DNA"/>
</dbReference>
<dbReference type="EMBL" id="CH471161">
    <property type="protein sequence ID" value="EAW89863.1"/>
    <property type="molecule type" value="Genomic_DNA"/>
</dbReference>
<dbReference type="EMBL" id="BC010175">
    <property type="protein sequence ID" value="AAH10175.1"/>
    <property type="molecule type" value="mRNA"/>
</dbReference>
<dbReference type="CCDS" id="CCDS14580.1">
    <molecule id="P49459-1"/>
</dbReference>
<dbReference type="CCDS" id="CCDS14581.1">
    <molecule id="P49459-2"/>
</dbReference>
<dbReference type="PIR" id="A41222">
    <property type="entry name" value="A41222"/>
</dbReference>
<dbReference type="RefSeq" id="NP_001269090.1">
    <property type="nucleotide sequence ID" value="NM_001282161.1"/>
</dbReference>
<dbReference type="RefSeq" id="NP_003327.2">
    <molecule id="P49459-1"/>
    <property type="nucleotide sequence ID" value="NM_003336.3"/>
</dbReference>
<dbReference type="RefSeq" id="NP_861427.1">
    <molecule id="P49459-2"/>
    <property type="nucleotide sequence ID" value="NM_181762.3"/>
</dbReference>
<dbReference type="PDB" id="6CYO">
    <property type="method" value="X-ray"/>
    <property type="resolution" value="1.85 A"/>
    <property type="chains" value="A=1-152"/>
</dbReference>
<dbReference type="PDB" id="6CYR">
    <property type="method" value="X-ray"/>
    <property type="resolution" value="2.20 A"/>
    <property type="chains" value="A=1-152"/>
</dbReference>
<dbReference type="PDB" id="8BTL">
    <property type="method" value="X-ray"/>
    <property type="resolution" value="3.20 A"/>
    <property type="chains" value="C/D=17-152"/>
</dbReference>
<dbReference type="PDB" id="8IEJ">
    <property type="method" value="EM"/>
    <property type="resolution" value="3.12 A"/>
    <property type="chains" value="R=1-150"/>
</dbReference>
<dbReference type="PDBsum" id="6CYO"/>
<dbReference type="PDBsum" id="6CYR"/>
<dbReference type="PDBsum" id="8BTL"/>
<dbReference type="PDBsum" id="8IEJ"/>
<dbReference type="EMDB" id="EMD-35383"/>
<dbReference type="SMR" id="P49459"/>
<dbReference type="BioGRID" id="113167">
    <property type="interactions" value="234"/>
</dbReference>
<dbReference type="CORUM" id="P49459"/>
<dbReference type="DIP" id="DIP-24260N"/>
<dbReference type="FunCoup" id="P49459">
    <property type="interactions" value="3383"/>
</dbReference>
<dbReference type="IntAct" id="P49459">
    <property type="interactions" value="54"/>
</dbReference>
<dbReference type="MINT" id="P49459"/>
<dbReference type="STRING" id="9606.ENSP00000360613"/>
<dbReference type="iPTMnet" id="P49459"/>
<dbReference type="PhosphoSitePlus" id="P49459"/>
<dbReference type="SwissPalm" id="P49459"/>
<dbReference type="BioMuta" id="UBE2A"/>
<dbReference type="DMDM" id="33518639"/>
<dbReference type="jPOST" id="P49459"/>
<dbReference type="MassIVE" id="P49459"/>
<dbReference type="PaxDb" id="9606-ENSP00000360613"/>
<dbReference type="PeptideAtlas" id="P49459"/>
<dbReference type="ProteomicsDB" id="56018">
    <molecule id="P49459-1"/>
</dbReference>
<dbReference type="ProteomicsDB" id="56019">
    <molecule id="P49459-2"/>
</dbReference>
<dbReference type="ProteomicsDB" id="56020">
    <molecule id="P49459-3"/>
</dbReference>
<dbReference type="Pumba" id="P49459"/>
<dbReference type="TopDownProteomics" id="P49459-1">
    <molecule id="P49459-1"/>
</dbReference>
<dbReference type="TopDownProteomics" id="P49459-2">
    <molecule id="P49459-2"/>
</dbReference>
<dbReference type="Antibodypedia" id="29799">
    <property type="antibodies" value="209 antibodies from 28 providers"/>
</dbReference>
<dbReference type="DNASU" id="7319"/>
<dbReference type="Ensembl" id="ENST00000371558.7">
    <molecule id="P49459-1"/>
    <property type="protein sequence ID" value="ENSP00000360613.2"/>
    <property type="gene ID" value="ENSG00000077721.17"/>
</dbReference>
<dbReference type="Ensembl" id="ENST00000625938.2">
    <molecule id="P49459-2"/>
    <property type="protein sequence ID" value="ENSP00000486599.1"/>
    <property type="gene ID" value="ENSG00000077721.17"/>
</dbReference>
<dbReference type="Ensembl" id="ENST00000630695.2">
    <molecule id="P49459-3"/>
    <property type="protein sequence ID" value="ENSP00000486550.1"/>
    <property type="gene ID" value="ENSG00000077721.17"/>
</dbReference>
<dbReference type="Ensembl" id="ENST00000696534.1">
    <molecule id="P49459-1"/>
    <property type="protein sequence ID" value="ENSP00000512695.1"/>
    <property type="gene ID" value="ENSG00000077721.17"/>
</dbReference>
<dbReference type="GeneID" id="7319"/>
<dbReference type="KEGG" id="hsa:7319"/>
<dbReference type="MANE-Select" id="ENST00000371558.7">
    <property type="protein sequence ID" value="ENSP00000360613.2"/>
    <property type="RefSeq nucleotide sequence ID" value="NM_003336.4"/>
    <property type="RefSeq protein sequence ID" value="NP_003327.2"/>
</dbReference>
<dbReference type="UCSC" id="uc004erl.5">
    <molecule id="P49459-1"/>
    <property type="organism name" value="human"/>
</dbReference>
<dbReference type="AGR" id="HGNC:12472"/>
<dbReference type="CTD" id="7319"/>
<dbReference type="DisGeNET" id="7319"/>
<dbReference type="GeneCards" id="UBE2A"/>
<dbReference type="HGNC" id="HGNC:12472">
    <property type="gene designation" value="UBE2A"/>
</dbReference>
<dbReference type="HPA" id="ENSG00000077721">
    <property type="expression patterns" value="Low tissue specificity"/>
</dbReference>
<dbReference type="MalaCards" id="UBE2A"/>
<dbReference type="MIM" id="300860">
    <property type="type" value="phenotype"/>
</dbReference>
<dbReference type="MIM" id="312180">
    <property type="type" value="gene"/>
</dbReference>
<dbReference type="neXtProt" id="NX_P49459"/>
<dbReference type="OpenTargets" id="ENSG00000077721"/>
<dbReference type="Orphanet" id="163956">
    <property type="disease" value="X-linked intellectual disability, Nascimento type"/>
</dbReference>
<dbReference type="PharmGKB" id="PA37122"/>
<dbReference type="VEuPathDB" id="HostDB:ENSG00000077721"/>
<dbReference type="eggNOG" id="KOG0419">
    <property type="taxonomic scope" value="Eukaryota"/>
</dbReference>
<dbReference type="GeneTree" id="ENSGT00940000155075"/>
<dbReference type="HOGENOM" id="CLU_030988_10_2_1"/>
<dbReference type="InParanoid" id="P49459"/>
<dbReference type="OMA" id="DHKSQYI"/>
<dbReference type="OrthoDB" id="9984419at2759"/>
<dbReference type="PAN-GO" id="P49459">
    <property type="GO annotations" value="6 GO annotations based on evolutionary models"/>
</dbReference>
<dbReference type="PhylomeDB" id="P49459"/>
<dbReference type="TreeFam" id="TF101128"/>
<dbReference type="BRENDA" id="2.3.2.23">
    <property type="organism ID" value="2681"/>
</dbReference>
<dbReference type="BRENDA" id="2.3.2.24">
    <property type="organism ID" value="2681"/>
</dbReference>
<dbReference type="PathwayCommons" id="P49459"/>
<dbReference type="Reactome" id="R-HSA-8866652">
    <property type="pathway name" value="Synthesis of active ubiquitin: roles of E1 and E2 enzymes"/>
</dbReference>
<dbReference type="Reactome" id="R-HSA-8866654">
    <property type="pathway name" value="E3 ubiquitin ligases ubiquitinate target proteins"/>
</dbReference>
<dbReference type="Reactome" id="R-HSA-983168">
    <property type="pathway name" value="Antigen processing: Ubiquitination &amp; Proteasome degradation"/>
</dbReference>
<dbReference type="SignaLink" id="P49459"/>
<dbReference type="SIGNOR" id="P49459"/>
<dbReference type="UniPathway" id="UPA00143"/>
<dbReference type="BioGRID-ORCS" id="7319">
    <property type="hits" value="42 hits in 790 CRISPR screens"/>
</dbReference>
<dbReference type="ChiTaRS" id="UBE2A">
    <property type="organism name" value="human"/>
</dbReference>
<dbReference type="GeneWiki" id="UBE2A"/>
<dbReference type="GenomeRNAi" id="7319"/>
<dbReference type="Pharos" id="P49459">
    <property type="development level" value="Tbio"/>
</dbReference>
<dbReference type="PRO" id="PR:P49459"/>
<dbReference type="Proteomes" id="UP000005640">
    <property type="component" value="Chromosome X"/>
</dbReference>
<dbReference type="RNAct" id="P49459">
    <property type="molecule type" value="protein"/>
</dbReference>
<dbReference type="Bgee" id="ENSG00000077721">
    <property type="expression patterns" value="Expressed in endothelial cell and 208 other cell types or tissues"/>
</dbReference>
<dbReference type="ExpressionAtlas" id="P49459">
    <property type="expression patterns" value="baseline and differential"/>
</dbReference>
<dbReference type="GO" id="GO:0000785">
    <property type="term" value="C:chromatin"/>
    <property type="evidence" value="ECO:0000250"/>
    <property type="project" value="UniProtKB"/>
</dbReference>
<dbReference type="GO" id="GO:0005829">
    <property type="term" value="C:cytosol"/>
    <property type="evidence" value="ECO:0000304"/>
    <property type="project" value="Reactome"/>
</dbReference>
<dbReference type="GO" id="GO:0033503">
    <property type="term" value="C:HULC complex"/>
    <property type="evidence" value="ECO:0000314"/>
    <property type="project" value="UniProtKB"/>
</dbReference>
<dbReference type="GO" id="GO:0005770">
    <property type="term" value="C:late endosome"/>
    <property type="evidence" value="ECO:0007669"/>
    <property type="project" value="UniProtKB-SubCell"/>
</dbReference>
<dbReference type="GO" id="GO:0005764">
    <property type="term" value="C:lysosome"/>
    <property type="evidence" value="ECO:0007669"/>
    <property type="project" value="UniProtKB-SubCell"/>
</dbReference>
<dbReference type="GO" id="GO:0005654">
    <property type="term" value="C:nucleoplasm"/>
    <property type="evidence" value="ECO:0000304"/>
    <property type="project" value="Reactome"/>
</dbReference>
<dbReference type="GO" id="GO:0005524">
    <property type="term" value="F:ATP binding"/>
    <property type="evidence" value="ECO:0007669"/>
    <property type="project" value="UniProtKB-KW"/>
</dbReference>
<dbReference type="GO" id="GO:0043130">
    <property type="term" value="F:ubiquitin binding"/>
    <property type="evidence" value="ECO:0000304"/>
    <property type="project" value="Reactome"/>
</dbReference>
<dbReference type="GO" id="GO:0061631">
    <property type="term" value="F:ubiquitin conjugating enzyme activity"/>
    <property type="evidence" value="ECO:0000314"/>
    <property type="project" value="UniProtKB"/>
</dbReference>
<dbReference type="GO" id="GO:0031625">
    <property type="term" value="F:ubiquitin protein ligase binding"/>
    <property type="evidence" value="ECO:0000353"/>
    <property type="project" value="UniProtKB"/>
</dbReference>
<dbReference type="GO" id="GO:0004842">
    <property type="term" value="F:ubiquitin-protein transferase activity"/>
    <property type="evidence" value="ECO:0000314"/>
    <property type="project" value="UniProtKB"/>
</dbReference>
<dbReference type="GO" id="GO:0006338">
    <property type="term" value="P:chromatin remodeling"/>
    <property type="evidence" value="ECO:0000315"/>
    <property type="project" value="UniProtKB"/>
</dbReference>
<dbReference type="GO" id="GO:0006281">
    <property type="term" value="P:DNA repair"/>
    <property type="evidence" value="ECO:0000316"/>
    <property type="project" value="UniProtKB"/>
</dbReference>
<dbReference type="GO" id="GO:0000086">
    <property type="term" value="P:G2/M transition of mitotic cell cycle"/>
    <property type="evidence" value="ECO:0000314"/>
    <property type="project" value="UniProtKB"/>
</dbReference>
<dbReference type="GO" id="GO:1901526">
    <property type="term" value="P:positive regulation of mitophagy"/>
    <property type="evidence" value="ECO:0000314"/>
    <property type="project" value="UniProtKB"/>
</dbReference>
<dbReference type="GO" id="GO:0006301">
    <property type="term" value="P:postreplication repair"/>
    <property type="evidence" value="ECO:0000303"/>
    <property type="project" value="UniProtKB"/>
</dbReference>
<dbReference type="GO" id="GO:0043161">
    <property type="term" value="P:proteasome-mediated ubiquitin-dependent protein catabolic process"/>
    <property type="evidence" value="ECO:0000318"/>
    <property type="project" value="GO_Central"/>
</dbReference>
<dbReference type="GO" id="GO:0070979">
    <property type="term" value="P:protein K11-linked ubiquitination"/>
    <property type="evidence" value="ECO:0000314"/>
    <property type="project" value="UniProtKB"/>
</dbReference>
<dbReference type="GO" id="GO:0070936">
    <property type="term" value="P:protein K48-linked ubiquitination"/>
    <property type="evidence" value="ECO:0000314"/>
    <property type="project" value="UniProtKB"/>
</dbReference>
<dbReference type="GO" id="GO:0000209">
    <property type="term" value="P:protein polyubiquitination"/>
    <property type="evidence" value="ECO:0000318"/>
    <property type="project" value="GO_Central"/>
</dbReference>
<dbReference type="GO" id="GO:0009411">
    <property type="term" value="P:response to UV"/>
    <property type="evidence" value="ECO:0000316"/>
    <property type="project" value="UniProtKB"/>
</dbReference>
<dbReference type="GO" id="GO:0006511">
    <property type="term" value="P:ubiquitin-dependent protein catabolic process"/>
    <property type="evidence" value="ECO:0000303"/>
    <property type="project" value="UniProtKB"/>
</dbReference>
<dbReference type="CDD" id="cd23790">
    <property type="entry name" value="UBCc_UBE2A_2B"/>
    <property type="match status" value="1"/>
</dbReference>
<dbReference type="FunFam" id="3.10.110.10:FF:000062">
    <property type="entry name" value="Ubiquitin-conjugating enzyme E2 B"/>
    <property type="match status" value="1"/>
</dbReference>
<dbReference type="Gene3D" id="3.10.110.10">
    <property type="entry name" value="Ubiquitin Conjugating Enzyme"/>
    <property type="match status" value="1"/>
</dbReference>
<dbReference type="InterPro" id="IPR050113">
    <property type="entry name" value="Ub_conjugating_enzyme"/>
</dbReference>
<dbReference type="InterPro" id="IPR000608">
    <property type="entry name" value="UBQ-conjugat_E2_core"/>
</dbReference>
<dbReference type="InterPro" id="IPR023313">
    <property type="entry name" value="UBQ-conjugating_AS"/>
</dbReference>
<dbReference type="InterPro" id="IPR016135">
    <property type="entry name" value="UBQ-conjugating_enzyme/RWD"/>
</dbReference>
<dbReference type="PANTHER" id="PTHR24067">
    <property type="entry name" value="UBIQUITIN-CONJUGATING ENZYME E2"/>
    <property type="match status" value="1"/>
</dbReference>
<dbReference type="Pfam" id="PF00179">
    <property type="entry name" value="UQ_con"/>
    <property type="match status" value="1"/>
</dbReference>
<dbReference type="SMART" id="SM00212">
    <property type="entry name" value="UBCc"/>
    <property type="match status" value="1"/>
</dbReference>
<dbReference type="SUPFAM" id="SSF54495">
    <property type="entry name" value="UBC-like"/>
    <property type="match status" value="1"/>
</dbReference>
<dbReference type="PROSITE" id="PS00183">
    <property type="entry name" value="UBC_1"/>
    <property type="match status" value="1"/>
</dbReference>
<dbReference type="PROSITE" id="PS50127">
    <property type="entry name" value="UBC_2"/>
    <property type="match status" value="1"/>
</dbReference>
<reference key="1">
    <citation type="journal article" date="1991" name="Proc. Natl. Acad. Sci. U.S.A.">
        <title>Structural and functional conservation of two human homologs of the yeast DNA repair gene RAD6.</title>
        <authorList>
            <person name="Koken M.H.M."/>
            <person name="Reynolds P."/>
            <person name="Jaspers-Dekker I."/>
            <person name="Prakash L."/>
            <person name="Prakash S."/>
            <person name="Bootsma D."/>
            <person name="Hoeijmakers J.H.J."/>
        </authorList>
    </citation>
    <scope>NUCLEOTIDE SEQUENCE [MRNA] (ISOFORM 1)</scope>
</reference>
<reference key="2">
    <citation type="journal article" date="2004" name="Nat. Genet.">
        <title>Complete sequencing and characterization of 21,243 full-length human cDNAs.</title>
        <authorList>
            <person name="Ota T."/>
            <person name="Suzuki Y."/>
            <person name="Nishikawa T."/>
            <person name="Otsuki T."/>
            <person name="Sugiyama T."/>
            <person name="Irie R."/>
            <person name="Wakamatsu A."/>
            <person name="Hayashi K."/>
            <person name="Sato H."/>
            <person name="Nagai K."/>
            <person name="Kimura K."/>
            <person name="Makita H."/>
            <person name="Sekine M."/>
            <person name="Obayashi M."/>
            <person name="Nishi T."/>
            <person name="Shibahara T."/>
            <person name="Tanaka T."/>
            <person name="Ishii S."/>
            <person name="Yamamoto J."/>
            <person name="Saito K."/>
            <person name="Kawai Y."/>
            <person name="Isono Y."/>
            <person name="Nakamura Y."/>
            <person name="Nagahari K."/>
            <person name="Murakami K."/>
            <person name="Yasuda T."/>
            <person name="Iwayanagi T."/>
            <person name="Wagatsuma M."/>
            <person name="Shiratori A."/>
            <person name="Sudo H."/>
            <person name="Hosoiri T."/>
            <person name="Kaku Y."/>
            <person name="Kodaira H."/>
            <person name="Kondo H."/>
            <person name="Sugawara M."/>
            <person name="Takahashi M."/>
            <person name="Kanda K."/>
            <person name="Yokoi T."/>
            <person name="Furuya T."/>
            <person name="Kikkawa E."/>
            <person name="Omura Y."/>
            <person name="Abe K."/>
            <person name="Kamihara K."/>
            <person name="Katsuta N."/>
            <person name="Sato K."/>
            <person name="Tanikawa M."/>
            <person name="Yamazaki M."/>
            <person name="Ninomiya K."/>
            <person name="Ishibashi T."/>
            <person name="Yamashita H."/>
            <person name="Murakawa K."/>
            <person name="Fujimori K."/>
            <person name="Tanai H."/>
            <person name="Kimata M."/>
            <person name="Watanabe M."/>
            <person name="Hiraoka S."/>
            <person name="Chiba Y."/>
            <person name="Ishida S."/>
            <person name="Ono Y."/>
            <person name="Takiguchi S."/>
            <person name="Watanabe S."/>
            <person name="Yosida M."/>
            <person name="Hotuta T."/>
            <person name="Kusano J."/>
            <person name="Kanehori K."/>
            <person name="Takahashi-Fujii A."/>
            <person name="Hara H."/>
            <person name="Tanase T.-O."/>
            <person name="Nomura Y."/>
            <person name="Togiya S."/>
            <person name="Komai F."/>
            <person name="Hara R."/>
            <person name="Takeuchi K."/>
            <person name="Arita M."/>
            <person name="Imose N."/>
            <person name="Musashino K."/>
            <person name="Yuuki H."/>
            <person name="Oshima A."/>
            <person name="Sasaki N."/>
            <person name="Aotsuka S."/>
            <person name="Yoshikawa Y."/>
            <person name="Matsunawa H."/>
            <person name="Ichihara T."/>
            <person name="Shiohata N."/>
            <person name="Sano S."/>
            <person name="Moriya S."/>
            <person name="Momiyama H."/>
            <person name="Satoh N."/>
            <person name="Takami S."/>
            <person name="Terashima Y."/>
            <person name="Suzuki O."/>
            <person name="Nakagawa S."/>
            <person name="Senoh A."/>
            <person name="Mizoguchi H."/>
            <person name="Goto Y."/>
            <person name="Shimizu F."/>
            <person name="Wakebe H."/>
            <person name="Hishigaki H."/>
            <person name="Watanabe T."/>
            <person name="Sugiyama A."/>
            <person name="Takemoto M."/>
            <person name="Kawakami B."/>
            <person name="Yamazaki M."/>
            <person name="Watanabe K."/>
            <person name="Kumagai A."/>
            <person name="Itakura S."/>
            <person name="Fukuzumi Y."/>
            <person name="Fujimori Y."/>
            <person name="Komiyama M."/>
            <person name="Tashiro H."/>
            <person name="Tanigami A."/>
            <person name="Fujiwara T."/>
            <person name="Ono T."/>
            <person name="Yamada K."/>
            <person name="Fujii Y."/>
            <person name="Ozaki K."/>
            <person name="Hirao M."/>
            <person name="Ohmori Y."/>
            <person name="Kawabata A."/>
            <person name="Hikiji T."/>
            <person name="Kobatake N."/>
            <person name="Inagaki H."/>
            <person name="Ikema Y."/>
            <person name="Okamoto S."/>
            <person name="Okitani R."/>
            <person name="Kawakami T."/>
            <person name="Noguchi S."/>
            <person name="Itoh T."/>
            <person name="Shigeta K."/>
            <person name="Senba T."/>
            <person name="Matsumura K."/>
            <person name="Nakajima Y."/>
            <person name="Mizuno T."/>
            <person name="Morinaga M."/>
            <person name="Sasaki M."/>
            <person name="Togashi T."/>
            <person name="Oyama M."/>
            <person name="Hata H."/>
            <person name="Watanabe M."/>
            <person name="Komatsu T."/>
            <person name="Mizushima-Sugano J."/>
            <person name="Satoh T."/>
            <person name="Shirai Y."/>
            <person name="Takahashi Y."/>
            <person name="Nakagawa K."/>
            <person name="Okumura K."/>
            <person name="Nagase T."/>
            <person name="Nomura N."/>
            <person name="Kikuchi H."/>
            <person name="Masuho Y."/>
            <person name="Yamashita R."/>
            <person name="Nakai K."/>
            <person name="Yada T."/>
            <person name="Nakamura Y."/>
            <person name="Ohara O."/>
            <person name="Isogai T."/>
            <person name="Sugano S."/>
        </authorList>
    </citation>
    <scope>NUCLEOTIDE SEQUENCE [LARGE SCALE MRNA] (ISOFORMS 1 AND 2)</scope>
    <source>
        <tissue>Subthalamic nucleus</tissue>
    </source>
</reference>
<reference key="3">
    <citation type="submission" date="2005-05" db="EMBL/GenBank/DDBJ databases">
        <authorList>
            <consortium name="NIEHS SNPs program"/>
        </authorList>
    </citation>
    <scope>NUCLEOTIDE SEQUENCE [GENOMIC DNA]</scope>
</reference>
<reference key="4">
    <citation type="journal article" date="2005" name="Nature">
        <title>The DNA sequence of the human X chromosome.</title>
        <authorList>
            <person name="Ross M.T."/>
            <person name="Grafham D.V."/>
            <person name="Coffey A.J."/>
            <person name="Scherer S."/>
            <person name="McLay K."/>
            <person name="Muzny D."/>
            <person name="Platzer M."/>
            <person name="Howell G.R."/>
            <person name="Burrows C."/>
            <person name="Bird C.P."/>
            <person name="Frankish A."/>
            <person name="Lovell F.L."/>
            <person name="Howe K.L."/>
            <person name="Ashurst J.L."/>
            <person name="Fulton R.S."/>
            <person name="Sudbrak R."/>
            <person name="Wen G."/>
            <person name="Jones M.C."/>
            <person name="Hurles M.E."/>
            <person name="Andrews T.D."/>
            <person name="Scott C.E."/>
            <person name="Searle S."/>
            <person name="Ramser J."/>
            <person name="Whittaker A."/>
            <person name="Deadman R."/>
            <person name="Carter N.P."/>
            <person name="Hunt S.E."/>
            <person name="Chen R."/>
            <person name="Cree A."/>
            <person name="Gunaratne P."/>
            <person name="Havlak P."/>
            <person name="Hodgson A."/>
            <person name="Metzker M.L."/>
            <person name="Richards S."/>
            <person name="Scott G."/>
            <person name="Steffen D."/>
            <person name="Sodergren E."/>
            <person name="Wheeler D.A."/>
            <person name="Worley K.C."/>
            <person name="Ainscough R."/>
            <person name="Ambrose K.D."/>
            <person name="Ansari-Lari M.A."/>
            <person name="Aradhya S."/>
            <person name="Ashwell R.I."/>
            <person name="Babbage A.K."/>
            <person name="Bagguley C.L."/>
            <person name="Ballabio A."/>
            <person name="Banerjee R."/>
            <person name="Barker G.E."/>
            <person name="Barlow K.F."/>
            <person name="Barrett I.P."/>
            <person name="Bates K.N."/>
            <person name="Beare D.M."/>
            <person name="Beasley H."/>
            <person name="Beasley O."/>
            <person name="Beck A."/>
            <person name="Bethel G."/>
            <person name="Blechschmidt K."/>
            <person name="Brady N."/>
            <person name="Bray-Allen S."/>
            <person name="Bridgeman A.M."/>
            <person name="Brown A.J."/>
            <person name="Brown M.J."/>
            <person name="Bonnin D."/>
            <person name="Bruford E.A."/>
            <person name="Buhay C."/>
            <person name="Burch P."/>
            <person name="Burford D."/>
            <person name="Burgess J."/>
            <person name="Burrill W."/>
            <person name="Burton J."/>
            <person name="Bye J.M."/>
            <person name="Carder C."/>
            <person name="Carrel L."/>
            <person name="Chako J."/>
            <person name="Chapman J.C."/>
            <person name="Chavez D."/>
            <person name="Chen E."/>
            <person name="Chen G."/>
            <person name="Chen Y."/>
            <person name="Chen Z."/>
            <person name="Chinault C."/>
            <person name="Ciccodicola A."/>
            <person name="Clark S.Y."/>
            <person name="Clarke G."/>
            <person name="Clee C.M."/>
            <person name="Clegg S."/>
            <person name="Clerc-Blankenburg K."/>
            <person name="Clifford K."/>
            <person name="Cobley V."/>
            <person name="Cole C.G."/>
            <person name="Conquer J.S."/>
            <person name="Corby N."/>
            <person name="Connor R.E."/>
            <person name="David R."/>
            <person name="Davies J."/>
            <person name="Davis C."/>
            <person name="Davis J."/>
            <person name="Delgado O."/>
            <person name="Deshazo D."/>
            <person name="Dhami P."/>
            <person name="Ding Y."/>
            <person name="Dinh H."/>
            <person name="Dodsworth S."/>
            <person name="Draper H."/>
            <person name="Dugan-Rocha S."/>
            <person name="Dunham A."/>
            <person name="Dunn M."/>
            <person name="Durbin K.J."/>
            <person name="Dutta I."/>
            <person name="Eades T."/>
            <person name="Ellwood M."/>
            <person name="Emery-Cohen A."/>
            <person name="Errington H."/>
            <person name="Evans K.L."/>
            <person name="Faulkner L."/>
            <person name="Francis F."/>
            <person name="Frankland J."/>
            <person name="Fraser A.E."/>
            <person name="Galgoczy P."/>
            <person name="Gilbert J."/>
            <person name="Gill R."/>
            <person name="Gloeckner G."/>
            <person name="Gregory S.G."/>
            <person name="Gribble S."/>
            <person name="Griffiths C."/>
            <person name="Grocock R."/>
            <person name="Gu Y."/>
            <person name="Gwilliam R."/>
            <person name="Hamilton C."/>
            <person name="Hart E.A."/>
            <person name="Hawes A."/>
            <person name="Heath P.D."/>
            <person name="Heitmann K."/>
            <person name="Hennig S."/>
            <person name="Hernandez J."/>
            <person name="Hinzmann B."/>
            <person name="Ho S."/>
            <person name="Hoffs M."/>
            <person name="Howden P.J."/>
            <person name="Huckle E.J."/>
            <person name="Hume J."/>
            <person name="Hunt P.J."/>
            <person name="Hunt A.R."/>
            <person name="Isherwood J."/>
            <person name="Jacob L."/>
            <person name="Johnson D."/>
            <person name="Jones S."/>
            <person name="de Jong P.J."/>
            <person name="Joseph S.S."/>
            <person name="Keenan S."/>
            <person name="Kelly S."/>
            <person name="Kershaw J.K."/>
            <person name="Khan Z."/>
            <person name="Kioschis P."/>
            <person name="Klages S."/>
            <person name="Knights A.J."/>
            <person name="Kosiura A."/>
            <person name="Kovar-Smith C."/>
            <person name="Laird G.K."/>
            <person name="Langford C."/>
            <person name="Lawlor S."/>
            <person name="Leversha M."/>
            <person name="Lewis L."/>
            <person name="Liu W."/>
            <person name="Lloyd C."/>
            <person name="Lloyd D.M."/>
            <person name="Loulseged H."/>
            <person name="Loveland J.E."/>
            <person name="Lovell J.D."/>
            <person name="Lozado R."/>
            <person name="Lu J."/>
            <person name="Lyne R."/>
            <person name="Ma J."/>
            <person name="Maheshwari M."/>
            <person name="Matthews L.H."/>
            <person name="McDowall J."/>
            <person name="McLaren S."/>
            <person name="McMurray A."/>
            <person name="Meidl P."/>
            <person name="Meitinger T."/>
            <person name="Milne S."/>
            <person name="Miner G."/>
            <person name="Mistry S.L."/>
            <person name="Morgan M."/>
            <person name="Morris S."/>
            <person name="Mueller I."/>
            <person name="Mullikin J.C."/>
            <person name="Nguyen N."/>
            <person name="Nordsiek G."/>
            <person name="Nyakatura G."/>
            <person name="O'dell C.N."/>
            <person name="Okwuonu G."/>
            <person name="Palmer S."/>
            <person name="Pandian R."/>
            <person name="Parker D."/>
            <person name="Parrish J."/>
            <person name="Pasternak S."/>
            <person name="Patel D."/>
            <person name="Pearce A.V."/>
            <person name="Pearson D.M."/>
            <person name="Pelan S.E."/>
            <person name="Perez L."/>
            <person name="Porter K.M."/>
            <person name="Ramsey Y."/>
            <person name="Reichwald K."/>
            <person name="Rhodes S."/>
            <person name="Ridler K.A."/>
            <person name="Schlessinger D."/>
            <person name="Schueler M.G."/>
            <person name="Sehra H.K."/>
            <person name="Shaw-Smith C."/>
            <person name="Shen H."/>
            <person name="Sheridan E.M."/>
            <person name="Shownkeen R."/>
            <person name="Skuce C.D."/>
            <person name="Smith M.L."/>
            <person name="Sotheran E.C."/>
            <person name="Steingruber H.E."/>
            <person name="Steward C.A."/>
            <person name="Storey R."/>
            <person name="Swann R.M."/>
            <person name="Swarbreck D."/>
            <person name="Tabor P.E."/>
            <person name="Taudien S."/>
            <person name="Taylor T."/>
            <person name="Teague B."/>
            <person name="Thomas K."/>
            <person name="Thorpe A."/>
            <person name="Timms K."/>
            <person name="Tracey A."/>
            <person name="Trevanion S."/>
            <person name="Tromans A.C."/>
            <person name="d'Urso M."/>
            <person name="Verduzco D."/>
            <person name="Villasana D."/>
            <person name="Waldron L."/>
            <person name="Wall M."/>
            <person name="Wang Q."/>
            <person name="Warren J."/>
            <person name="Warry G.L."/>
            <person name="Wei X."/>
            <person name="West A."/>
            <person name="Whitehead S.L."/>
            <person name="Whiteley M.N."/>
            <person name="Wilkinson J.E."/>
            <person name="Willey D.L."/>
            <person name="Williams G."/>
            <person name="Williams L."/>
            <person name="Williamson A."/>
            <person name="Williamson H."/>
            <person name="Wilming L."/>
            <person name="Woodmansey R.L."/>
            <person name="Wray P.W."/>
            <person name="Yen J."/>
            <person name="Zhang J."/>
            <person name="Zhou J."/>
            <person name="Zoghbi H."/>
            <person name="Zorilla S."/>
            <person name="Buck D."/>
            <person name="Reinhardt R."/>
            <person name="Poustka A."/>
            <person name="Rosenthal A."/>
            <person name="Lehrach H."/>
            <person name="Meindl A."/>
            <person name="Minx P.J."/>
            <person name="Hillier L.W."/>
            <person name="Willard H.F."/>
            <person name="Wilson R.K."/>
            <person name="Waterston R.H."/>
            <person name="Rice C.M."/>
            <person name="Vaudin M."/>
            <person name="Coulson A."/>
            <person name="Nelson D.L."/>
            <person name="Weinstock G."/>
            <person name="Sulston J.E."/>
            <person name="Durbin R.M."/>
            <person name="Hubbard T."/>
            <person name="Gibbs R.A."/>
            <person name="Beck S."/>
            <person name="Rogers J."/>
            <person name="Bentley D.R."/>
        </authorList>
    </citation>
    <scope>NUCLEOTIDE SEQUENCE [LARGE SCALE GENOMIC DNA]</scope>
</reference>
<reference key="5">
    <citation type="submission" date="2005-09" db="EMBL/GenBank/DDBJ databases">
        <authorList>
            <person name="Mural R.J."/>
            <person name="Istrail S."/>
            <person name="Sutton G.G."/>
            <person name="Florea L."/>
            <person name="Halpern A.L."/>
            <person name="Mobarry C.M."/>
            <person name="Lippert R."/>
            <person name="Walenz B."/>
            <person name="Shatkay H."/>
            <person name="Dew I."/>
            <person name="Miller J.R."/>
            <person name="Flanigan M.J."/>
            <person name="Edwards N.J."/>
            <person name="Bolanos R."/>
            <person name="Fasulo D."/>
            <person name="Halldorsson B.V."/>
            <person name="Hannenhalli S."/>
            <person name="Turner R."/>
            <person name="Yooseph S."/>
            <person name="Lu F."/>
            <person name="Nusskern D.R."/>
            <person name="Shue B.C."/>
            <person name="Zheng X.H."/>
            <person name="Zhong F."/>
            <person name="Delcher A.L."/>
            <person name="Huson D.H."/>
            <person name="Kravitz S.A."/>
            <person name="Mouchard L."/>
            <person name="Reinert K."/>
            <person name="Remington K.A."/>
            <person name="Clark A.G."/>
            <person name="Waterman M.S."/>
            <person name="Eichler E.E."/>
            <person name="Adams M.D."/>
            <person name="Hunkapiller M.W."/>
            <person name="Myers E.W."/>
            <person name="Venter J.C."/>
        </authorList>
    </citation>
    <scope>NUCLEOTIDE SEQUENCE [LARGE SCALE GENOMIC DNA]</scope>
</reference>
<reference key="6">
    <citation type="journal article" date="2004" name="Genome Res.">
        <title>The status, quality, and expansion of the NIH full-length cDNA project: the Mammalian Gene Collection (MGC).</title>
        <authorList>
            <consortium name="The MGC Project Team"/>
        </authorList>
    </citation>
    <scope>NUCLEOTIDE SEQUENCE [LARGE SCALE MRNA] (ISOFORM 1)</scope>
    <source>
        <tissue>Skin</tissue>
    </source>
</reference>
<reference key="7">
    <citation type="journal article" date="2005" name="Mol. Cell">
        <title>The human homolog of yeast BRE1 functions as a transcriptional coactivator through direct activator interactions.</title>
        <authorList>
            <person name="Kim J."/>
            <person name="Hake S.B."/>
            <person name="Roeder R.G."/>
        </authorList>
    </citation>
    <scope>FUNCTION</scope>
</reference>
<reference key="8">
    <citation type="journal article" date="2006" name="Am. J. Hum. Genet.">
        <title>UBE2A, which encodes a ubiquitin-conjugating enzyme, is mutated in a novel X-linked mental retardation syndrome.</title>
        <authorList>
            <person name="Nascimento R.M."/>
            <person name="Otto P.A."/>
            <person name="de Brouwer A.P."/>
            <person name="Vianna-Morgante A.M."/>
        </authorList>
    </citation>
    <scope>INVOLVEMENT IN MRXSN</scope>
    <scope>VARIANT MRXSN 128-GLN--CYS-152 DEL</scope>
</reference>
<reference key="9">
    <citation type="journal article" date="2010" name="J. Biol. Chem.">
        <title>The E2 ubiquitin-conjugating enzymes direct polyubiquitination to preferred lysines.</title>
        <authorList>
            <person name="David Y."/>
            <person name="Ziv T."/>
            <person name="Admon A."/>
            <person name="Navon A."/>
        </authorList>
    </citation>
    <scope>FUNCTION</scope>
    <scope>CATALYTIC ACTIVITY</scope>
</reference>
<reference key="10">
    <citation type="journal article" date="2011" name="BMC Syst. Biol.">
        <title>Initial characterization of the human central proteome.</title>
        <authorList>
            <person name="Burkard T.R."/>
            <person name="Planyavsky M."/>
            <person name="Kaupe I."/>
            <person name="Breitwieser F.P."/>
            <person name="Buerckstuemmer T."/>
            <person name="Bennett K.L."/>
            <person name="Superti-Furga G."/>
            <person name="Colinge J."/>
        </authorList>
    </citation>
    <scope>IDENTIFICATION BY MASS SPECTROMETRY [LARGE SCALE ANALYSIS]</scope>
</reference>
<reference key="11">
    <citation type="journal article" date="2011" name="Mol. Cell">
        <title>WAC, a functional partner of RNF20/40, regulates histone H2B ubiquitination and gene transcription.</title>
        <authorList>
            <person name="Zhang F."/>
            <person name="Yu X."/>
        </authorList>
    </citation>
    <scope>INTERACTION WITH WAC</scope>
</reference>
<reference key="12">
    <citation type="journal article" date="2012" name="Cell Cycle">
        <title>Phosphorylation by cyclin-dependent kinase-9 controls ubiquitin-conjugating enzyme-2A function.</title>
        <authorList>
            <person name="Shchebet A."/>
            <person name="Karpiuk O."/>
            <person name="Kremmer E."/>
            <person name="Eick D."/>
            <person name="Johnsen S.A."/>
        </authorList>
    </citation>
    <scope>PHOSPHORYLATION AT SER-120</scope>
</reference>
<reference key="13">
    <citation type="journal article" date="2015" name="Mol. Cell. Proteomics">
        <title>KCMF1 (potassium channel modulatory factor 1) Links RAD6 to UBR4 (ubiquitin N-recognin domain-containing E3 ligase 4) and lysosome-mediated degradation.</title>
        <authorList>
            <person name="Hong J.H."/>
            <person name="Kaustov L."/>
            <person name="Coyaud E."/>
            <person name="Srikumar T."/>
            <person name="Wan J."/>
            <person name="Arrowsmith C."/>
            <person name="Raught B."/>
        </authorList>
    </citation>
    <scope>FUNCTION</scope>
</reference>
<reference key="14">
    <citation type="journal article" date="2013" name="Mol. Cell">
        <title>Mutations in the intellectual disability gene Ube2a cause neuronal dysfunction and impair parkin-dependent mitophagy.</title>
        <authorList>
            <person name="Haddad D.M."/>
            <person name="Vilain S."/>
            <person name="Vos M."/>
            <person name="Esposito G."/>
            <person name="Matta S."/>
            <person name="Kalscheuer V.M."/>
            <person name="Craessaerts K."/>
            <person name="Leyssen M."/>
            <person name="Nascimento R.M."/>
            <person name="Vianna-Morgante A.M."/>
            <person name="De Strooper B."/>
            <person name="Van Esch H."/>
            <person name="Morais V.A."/>
            <person name="Verstreken P."/>
        </authorList>
    </citation>
    <scope>FUNCTION</scope>
    <scope>CATALYTIC ACTIVITY</scope>
    <scope>PATHWAY</scope>
    <scope>VARIANTS MRXSN TRP-7; GLN-11 AND 128-GLN--CYS-152 DEL</scope>
    <scope>CHARACTERIZATION OF VARIANTS MRXSN TRP-7 AND GLN-11</scope>
</reference>
<reference key="15">
    <citation type="journal article" date="2024" name="Nature">
        <title>Stress response silencing by an E3 ligase mutated in neurodegeneration.</title>
        <authorList>
            <person name="Haakonsen D.L."/>
            <person name="Heider M."/>
            <person name="Ingersoll A.J."/>
            <person name="Vodehnal K."/>
            <person name="Witus S.R."/>
            <person name="Uenaka T."/>
            <person name="Wernig M."/>
            <person name="Rape M."/>
        </authorList>
    </citation>
    <scope>FUNCTION</scope>
</reference>
<reference key="16">
    <citation type="journal article" date="2010" name="Clin. Genet.">
        <title>Novel missense mutations in the ubiquitination-related gene UBE2A cause a recognizable X-linked mental retardation syndrome.</title>
        <authorList>
            <person name="Budny B."/>
            <person name="Badura-Stronka M."/>
            <person name="Materna-Kiryluk A."/>
            <person name="Tzschach A."/>
            <person name="Raynaud M."/>
            <person name="Latos-Bielenska A."/>
            <person name="Ropers H.H."/>
        </authorList>
    </citation>
    <scope>VARIANTS MRXSN GLN-11 AND ARG-23</scope>
</reference>
<reference key="17">
    <citation type="journal article" date="2017" name="Hum. Genome Var.">
        <title>A novel UBE2A mutation causes X-linked intellectual disability type Nascimento.</title>
        <authorList>
            <person name="Tsurusaki Y."/>
            <person name="Ohashi I."/>
            <person name="Enomoto Y."/>
            <person name="Naruto T."/>
            <person name="Mitsui J."/>
            <person name="Aida N."/>
            <person name="Kurosawa K."/>
        </authorList>
    </citation>
    <scope>VARIANT MRXSN GLY-61</scope>
</reference>
<reference key="18">
    <citation type="journal article" date="2021" name="J. Gene Med.">
        <title>A novel missense mutation in the UBE2A gene causes intellectual disability in the large X-linked family.</title>
        <authorList>
            <person name="Arslan Satilmis S.B."/>
            <person name="Kurt E.E."/>
            <person name="Akcay E.P."/>
            <person name="Sazci A."/>
            <person name="Ceylan A.C."/>
        </authorList>
    </citation>
    <scope>VARIANT MRXSN ARG-26</scope>
</reference>
<reference evidence="21" key="19">
    <citation type="journal article" date="2024" name="Nat. Struct. Mol. Biol.">
        <title>UBE2A and UBE2B are recruited by an atypical E3 ligase module in UBR4.</title>
        <authorList>
            <person name="Barnsby-Greer L."/>
            <person name="Mabbitt P.D."/>
            <person name="Dery M.A."/>
            <person name="Squair D.R."/>
            <person name="Wood N.T."/>
            <person name="Lamoliatte F."/>
            <person name="Lange S.M."/>
            <person name="Virdee S."/>
        </authorList>
    </citation>
    <scope>X-RAY CRYSTALLOGRAPHY (3.2 ANGSTROMS) OF 17-152 IN COMPLEX WITH UBR4</scope>
    <scope>FUNCTION</scope>
    <scope>MUTAGENESIS OF ARG-7; ARG-8; ARG-11; ASN-80; ARG-95; SER-97 AND SER-120</scope>
</reference>
<accession>P49459</accession>
<accession>A6NFE9</accession>
<accession>A6NGR2</accession>
<accession>A6NMF5</accession>
<accession>B2R7R9</accession>
<accession>D3DWI1</accession>
<accession>Q4TTG1</accession>
<accession>Q96FX4</accession>
<keyword id="KW-0002">3D-structure</keyword>
<keyword id="KW-0025">Alternative splicing</keyword>
<keyword id="KW-0067">ATP-binding</keyword>
<keyword id="KW-0156">Chromatin regulator</keyword>
<keyword id="KW-0225">Disease variant</keyword>
<keyword id="KW-0227">DNA damage</keyword>
<keyword id="KW-0234">DNA repair</keyword>
<keyword id="KW-0967">Endosome</keyword>
<keyword id="KW-0991">Intellectual disability</keyword>
<keyword id="KW-0458">Lysosome</keyword>
<keyword id="KW-0547">Nucleotide-binding</keyword>
<keyword id="KW-0597">Phosphoprotein</keyword>
<keyword id="KW-1267">Proteomics identification</keyword>
<keyword id="KW-1185">Reference proteome</keyword>
<keyword id="KW-0808">Transferase</keyword>
<keyword id="KW-0833">Ubl conjugation pathway</keyword>
<gene>
    <name evidence="18 20" type="primary">UBE2A</name>
    <name evidence="17" type="synonym">RAD6A</name>
</gene>
<organism>
    <name type="scientific">Homo sapiens</name>
    <name type="common">Human</name>
    <dbReference type="NCBI Taxonomy" id="9606"/>
    <lineage>
        <taxon>Eukaryota</taxon>
        <taxon>Metazoa</taxon>
        <taxon>Chordata</taxon>
        <taxon>Craniata</taxon>
        <taxon>Vertebrata</taxon>
        <taxon>Euteleostomi</taxon>
        <taxon>Mammalia</taxon>
        <taxon>Eutheria</taxon>
        <taxon>Euarchontoglires</taxon>
        <taxon>Primates</taxon>
        <taxon>Haplorrhini</taxon>
        <taxon>Catarrhini</taxon>
        <taxon>Hominidae</taxon>
        <taxon>Homo</taxon>
    </lineage>
</organism>
<name>UBE2A_HUMAN</name>
<proteinExistence type="evidence at protein level"/>
<feature type="chain" id="PRO_0000082445" description="Ubiquitin-conjugating enzyme E2 A">
    <location>
        <begin position="1"/>
        <end position="152"/>
    </location>
</feature>
<feature type="domain" description="UBC core" evidence="2">
    <location>
        <begin position="4"/>
        <end position="150"/>
    </location>
</feature>
<feature type="active site" description="Glycyl thioester intermediate" evidence="2 3">
    <location>
        <position position="88"/>
    </location>
</feature>
<feature type="modified residue" description="Phosphoserine; by CDK9" evidence="9">
    <location>
        <position position="120"/>
    </location>
</feature>
<feature type="splice variant" id="VSP_043851" description="In isoform 3." evidence="19">
    <location>
        <begin position="1"/>
        <end position="75"/>
    </location>
</feature>
<feature type="splice variant" id="VSP_043852" description="In isoform 2." evidence="16">
    <location>
        <begin position="51"/>
        <end position="80"/>
    </location>
</feature>
<feature type="sequence variant" id="VAR_089246" description="In MRXSN; decreased mitophagy." evidence="10">
    <original>R</original>
    <variation>W</variation>
    <location>
        <position position="7"/>
    </location>
</feature>
<feature type="sequence variant" id="VAR_066627" description="In MRXSN; decreased mitophagy; dbSNP:rs387906728." evidence="7">
    <original>R</original>
    <variation>Q</variation>
    <location>
        <position position="11"/>
    </location>
</feature>
<feature type="sequence variant" id="VAR_066628" description="In MRXSN; dbSNP:rs1556235551." evidence="7">
    <original>G</original>
    <variation>R</variation>
    <location>
        <position position="23"/>
    </location>
</feature>
<feature type="sequence variant" id="VAR_089247" description="In MRXSN; uncertain significance." evidence="13">
    <original>G</original>
    <variation>R</variation>
    <location>
        <position position="26"/>
    </location>
</feature>
<feature type="sequence variant" id="VAR_089248" description="In MRXSN." evidence="12">
    <original>E</original>
    <variation>G</variation>
    <location>
        <position position="61"/>
    </location>
</feature>
<feature type="sequence variant" id="VAR_089249" description="In MRXSN." evidence="5 10">
    <location>
        <begin position="128"/>
        <end position="152"/>
    </location>
</feature>
<feature type="mutagenesis site" description="Impaired ability to transfer ubiquitin to UBR4." evidence="14">
    <original>R</original>
    <variation>A</variation>
    <location>
        <position position="7"/>
    </location>
</feature>
<feature type="mutagenesis site" description="Impaired ability to transfer ubiquitin to UBR4." evidence="14">
    <original>R</original>
    <variation>A</variation>
    <location>
        <position position="8"/>
    </location>
</feature>
<feature type="mutagenesis site" description="Impaired ability to transfer ubiquitin to UBR4." evidence="14">
    <original>R</original>
    <variation>A</variation>
    <location>
        <position position="11"/>
    </location>
</feature>
<feature type="mutagenesis site" description="Abolished ability to transfer ubiquitin to UBR4." evidence="14">
    <original>N</original>
    <variation>S</variation>
    <location>
        <position position="80"/>
    </location>
</feature>
<feature type="mutagenesis site" description="Impaired ability to transfer ubiquitin to UBR4." evidence="14">
    <original>R</original>
    <variation>A</variation>
    <location>
        <position position="95"/>
    </location>
</feature>
<feature type="mutagenesis site" description="Impaired ability to transfer ubiquitin to UBR4." evidence="14">
    <original>S</original>
    <variation>A</variation>
    <location>
        <position position="97"/>
    </location>
</feature>
<feature type="mutagenesis site" description="Abolished ability to transfer ubiquitin to UBR4." evidence="14">
    <original>S</original>
    <variation>A</variation>
    <location>
        <position position="120"/>
    </location>
</feature>
<feature type="sequence conflict" description="In Ref. 1; AAA35981." evidence="19" ref="1">
    <original>E</original>
    <variation>G</variation>
    <location>
        <position position="49"/>
    </location>
</feature>
<feature type="helix" evidence="22">
    <location>
        <begin position="4"/>
        <end position="18"/>
    </location>
</feature>
<feature type="strand" evidence="22">
    <location>
        <begin position="24"/>
        <end position="28"/>
    </location>
</feature>
<feature type="strand" evidence="22">
    <location>
        <begin position="35"/>
        <end position="42"/>
    </location>
</feature>
<feature type="turn" evidence="23">
    <location>
        <begin position="47"/>
        <end position="50"/>
    </location>
</feature>
<feature type="strand" evidence="22">
    <location>
        <begin position="52"/>
        <end position="58"/>
    </location>
</feature>
<feature type="turn" evidence="22">
    <location>
        <begin position="61"/>
        <end position="64"/>
    </location>
</feature>
<feature type="strand" evidence="22">
    <location>
        <begin position="69"/>
        <end position="72"/>
    </location>
</feature>
<feature type="strand" evidence="22">
    <location>
        <begin position="85"/>
        <end position="87"/>
    </location>
</feature>
<feature type="helix" evidence="22">
    <location>
        <begin position="90"/>
        <end position="93"/>
    </location>
</feature>
<feature type="helix" evidence="22">
    <location>
        <begin position="102"/>
        <end position="114"/>
    </location>
</feature>
<feature type="helix" evidence="22">
    <location>
        <begin position="124"/>
        <end position="132"/>
    </location>
</feature>
<feature type="helix" evidence="22">
    <location>
        <begin position="134"/>
        <end position="148"/>
    </location>
</feature>
<comment type="function">
    <text evidence="4 6 10 11 14 15">E2 ubiquitin-conjugating enzyme that accepts ubiquitin from the ubiquitin-activating enzyme E1 and transfers it to a E3 ubiquitin-protein ligase (PubMed:16337599, PubMed:20061386, PubMed:23685073, PubMed:25582440, PubMed:38297121). In vitro catalyzes 'Lys-11', as well as 'Lys-48'-linked polyubiquitination (PubMed:20061386). Together with the E3 enzyme BRE1 (RNF20 and/or RNF40), plays a role in transcription regulation by catalyzing the monoubiquitination of histone H2B at 'Lys-120' to form H2BK120ub1 (PubMed:16337599). H2BK120ub1 gives a specific tag for epigenetic transcriptional activation, elongation by RNA polymerase II, telomeric silencing, and is also a prerequisite for H3K4me and H3K79me formation (PubMed:16337599). Involved in mitophagy by acting as a E2 ubiquitin-conjugating enzyme for PRKN (PubMed:23685073). In association with the E3 enzyme UBR4, is involved in N-end rule-dependent protein degradation (PubMed:38182926). In association with the E3 ubiquitin-protein ligase complex SIFI, inhibits the mitochondrial stress response by acting as a E2 ubiquitin-conjugating enzyme for UBR4 and KCMF1 (PubMed:38297121).</text>
</comment>
<comment type="catalytic activity">
    <reaction evidence="2 3 6 10">
        <text>S-ubiquitinyl-[E1 ubiquitin-activating enzyme]-L-cysteine + [E2 ubiquitin-conjugating enzyme]-L-cysteine = [E1 ubiquitin-activating enzyme]-L-cysteine + S-ubiquitinyl-[E2 ubiquitin-conjugating enzyme]-L-cysteine.</text>
        <dbReference type="EC" id="2.3.2.23"/>
    </reaction>
</comment>
<comment type="pathway">
    <text evidence="2 6 10">Protein modification; protein ubiquitination.</text>
</comment>
<comment type="subunit">
    <text evidence="1 8">Interacts with RAD18 and WAC (PubMed:21329877). Interacts with RFPL4A and CCNB1 (By similarity).</text>
</comment>
<comment type="interaction">
    <interactant intactId="EBI-2339348">
        <id>P49459</id>
    </interactant>
    <interactant intactId="EBI-718729">
        <id>P55212</id>
        <label>CASP6</label>
    </interactant>
    <organismsDiffer>false</organismsDiffer>
    <experiments>3</experiments>
</comment>
<comment type="interaction">
    <interactant intactId="EBI-2339348">
        <id>P49459</id>
    </interactant>
    <interactant intactId="EBI-25837549">
        <id>P28329-3</id>
        <label>CHAT</label>
    </interactant>
    <organismsDiffer>false</organismsDiffer>
    <experiments>3</experiments>
</comment>
<comment type="interaction">
    <interactant intactId="EBI-2339348">
        <id>P49459</id>
    </interactant>
    <interactant intactId="EBI-395638">
        <id>O14645</id>
        <label>DNALI1</label>
    </interactant>
    <organismsDiffer>false</organismsDiffer>
    <experiments>3</experiments>
</comment>
<comment type="interaction">
    <interactant intactId="EBI-2339348">
        <id>P49459</id>
    </interactant>
    <interactant intactId="EBI-1054228">
        <id>P41091</id>
        <label>EIF2S3</label>
    </interactant>
    <organismsDiffer>false</organismsDiffer>
    <experiments>3</experiments>
</comment>
<comment type="interaction">
    <interactant intactId="EBI-2339348">
        <id>P49459</id>
    </interactant>
    <interactant intactId="EBI-25852368">
        <id>O75460-2</id>
        <label>ERN1</label>
    </interactant>
    <organismsDiffer>false</organismsDiffer>
    <experiments>3</experiments>
</comment>
<comment type="interaction">
    <interactant intactId="EBI-2339348">
        <id>P49459</id>
    </interactant>
    <interactant intactId="EBI-348399">
        <id>P22607</id>
        <label>FGFR3</label>
    </interactant>
    <organismsDiffer>false</organismsDiffer>
    <experiments>3</experiments>
</comment>
<comment type="interaction">
    <interactant intactId="EBI-2339348">
        <id>P49459</id>
    </interactant>
    <interactant intactId="EBI-10226858">
        <id>Q0VDC6</id>
        <label>FKBP1A</label>
    </interactant>
    <organismsDiffer>false</organismsDiffer>
    <experiments>3</experiments>
</comment>
<comment type="interaction">
    <interactant intactId="EBI-2339348">
        <id>P49459</id>
    </interactant>
    <interactant intactId="EBI-8285963">
        <id>Q14957</id>
        <label>GRIN2C</label>
    </interactant>
    <organismsDiffer>false</organismsDiffer>
    <experiments>3</experiments>
</comment>
<comment type="interaction">
    <interactant intactId="EBI-2339348">
        <id>P49459</id>
    </interactant>
    <interactant intactId="EBI-351506">
        <id>P06396</id>
        <label>GSN</label>
    </interactant>
    <organismsDiffer>false</organismsDiffer>
    <experiments>3</experiments>
</comment>
<comment type="interaction">
    <interactant intactId="EBI-2339348">
        <id>P49459</id>
    </interactant>
    <interactant intactId="EBI-712096">
        <id>P30519</id>
        <label>HMOX2</label>
    </interactant>
    <organismsDiffer>false</organismsDiffer>
    <experiments>3</experiments>
</comment>
<comment type="interaction">
    <interactant intactId="EBI-2339348">
        <id>P49459</id>
    </interactant>
    <interactant intactId="EBI-356991">
        <id>P54652</id>
        <label>HSPA2</label>
    </interactant>
    <organismsDiffer>false</organismsDiffer>
    <experiments>3</experiments>
</comment>
<comment type="interaction">
    <interactant intactId="EBI-2339348">
        <id>P49459</id>
    </interactant>
    <interactant intactId="EBI-948266">
        <id>O14901</id>
        <label>KLF11</label>
    </interactant>
    <organismsDiffer>false</organismsDiffer>
    <experiments>3</experiments>
</comment>
<comment type="interaction">
    <interactant intactId="EBI-2339348">
        <id>P49459</id>
    </interactant>
    <interactant intactId="EBI-21591415">
        <id>P13473-2</id>
        <label>LAMP2</label>
    </interactant>
    <organismsDiffer>false</organismsDiffer>
    <experiments>3</experiments>
</comment>
<comment type="interaction">
    <interactant intactId="EBI-2339348">
        <id>P49459</id>
    </interactant>
    <interactant intactId="EBI-2811583">
        <id>Q9BVL2</id>
        <label>NUP58</label>
    </interactant>
    <organismsDiffer>false</organismsDiffer>
    <experiments>3</experiments>
</comment>
<comment type="interaction">
    <interactant intactId="EBI-2339348">
        <id>P49459</id>
    </interactant>
    <interactant intactId="EBI-748974">
        <id>Q96CV9</id>
        <label>OPTN</label>
    </interactant>
    <organismsDiffer>false</organismsDiffer>
    <experiments>3</experiments>
</comment>
<comment type="interaction">
    <interactant intactId="EBI-2339348">
        <id>P49459</id>
    </interactant>
    <interactant intactId="EBI-5280197">
        <id>O75400-2</id>
        <label>PRPF40A</label>
    </interactant>
    <organismsDiffer>false</organismsDiffer>
    <experiments>3</experiments>
</comment>
<comment type="interaction">
    <interactant intactId="EBI-2339348">
        <id>P49459</id>
    </interactant>
    <interactant intactId="EBI-2339393">
        <id>Q9NS91</id>
        <label>RAD18</label>
    </interactant>
    <organismsDiffer>false</organismsDiffer>
    <experiments>4</experiments>
</comment>
<comment type="interaction">
    <interactant intactId="EBI-2339348">
        <id>P49459</id>
    </interactant>
    <interactant intactId="EBI-286642">
        <id>P62826</id>
        <label>RAN</label>
    </interactant>
    <organismsDiffer>false</organismsDiffer>
    <experiments>3</experiments>
</comment>
<comment type="interaction">
    <interactant intactId="EBI-2339348">
        <id>P49459</id>
    </interactant>
    <interactant intactId="EBI-948476">
        <id>Q8WZA2</id>
        <label>RAPGEF4</label>
    </interactant>
    <organismsDiffer>false</organismsDiffer>
    <experiments>3</experiments>
</comment>
<comment type="interaction">
    <interactant intactId="EBI-2339348">
        <id>P49459</id>
    </interactant>
    <interactant intactId="EBI-727004">
        <id>O00560</id>
        <label>SDCBP</label>
    </interactant>
    <organismsDiffer>false</organismsDiffer>
    <experiments>9</experiments>
</comment>
<comment type="interaction">
    <interactant intactId="EBI-2339348">
        <id>P49459</id>
    </interactant>
    <interactant intactId="EBI-741480">
        <id>Q9UMX0</id>
        <label>UBQLN1</label>
    </interactant>
    <organismsDiffer>false</organismsDiffer>
    <experiments>3</experiments>
</comment>
<comment type="interaction">
    <interactant intactId="EBI-2339348">
        <id>P49459</id>
    </interactant>
    <interactant intactId="EBI-25900580">
        <id>Q9Y649</id>
    </interactant>
    <organismsDiffer>false</organismsDiffer>
    <experiments>3</experiments>
</comment>
<comment type="subcellular location">
    <subcellularLocation>
        <location evidence="11">Late endosome</location>
    </subcellularLocation>
    <subcellularLocation>
        <location evidence="11">Lysosome</location>
    </subcellularLocation>
</comment>
<comment type="alternative products">
    <event type="alternative splicing"/>
    <isoform>
        <id>P49459-1</id>
        <name>1</name>
        <sequence type="displayed"/>
    </isoform>
    <isoform>
        <id>P49459-2</id>
        <name>2</name>
        <sequence type="described" ref="VSP_043852"/>
    </isoform>
    <isoform>
        <id>P49459-3</id>
        <name>3</name>
        <sequence type="described" ref="VSP_043851"/>
    </isoform>
</comment>
<comment type="PTM">
    <text evidence="9">Phosphorylation at Ser-120 by CDK9 increases activity towards histone H2B.</text>
</comment>
<comment type="disease" evidence="5 7 10 12 13">
    <disease id="DI-03285">
        <name>Intellectual developmental disorder, X-linked, syndromic, Nascimento-type</name>
        <acronym>MRXSN</acronym>
        <description>A disorder characterized by significantly below average general intellectual functioning associated with impairments in adaptive behavior and manifested during the developmental period. MRXSN features include dysmorphic facies, hirsutism, skin and nails abnormalities, obesity, speech anomalies and seizures.</description>
        <dbReference type="MIM" id="300860"/>
    </disease>
    <text>The disease is caused by variants affecting the gene represented in this entry.</text>
</comment>
<comment type="similarity">
    <text evidence="2">Belongs to the ubiquitin-conjugating enzyme family.</text>
</comment>
<protein>
    <recommendedName>
        <fullName evidence="19">Ubiquitin-conjugating enzyme E2 A</fullName>
        <ecNumber evidence="6 10">2.3.2.23</ecNumber>
    </recommendedName>
    <alternativeName>
        <fullName evidence="18">E2 ubiquitin-conjugating enzyme A</fullName>
    </alternativeName>
    <alternativeName>
        <fullName evidence="17">RAD6 homolog A</fullName>
        <shortName evidence="17">HR6A</shortName>
        <shortName evidence="17">hHR6A</shortName>
    </alternativeName>
    <alternativeName>
        <fullName>Ubiquitin carrier protein A</fullName>
    </alternativeName>
    <alternativeName>
        <fullName>Ubiquitin-protein ligase A</fullName>
    </alternativeName>
</protein>